<protein>
    <recommendedName>
        <fullName evidence="2">Elongation factor Tu</fullName>
        <shortName evidence="2">EF-Tu</shortName>
        <ecNumber evidence="2">3.6.5.3</ecNumber>
    </recommendedName>
</protein>
<reference key="1">
    <citation type="journal article" date="2005" name="Infect. Immun.">
        <title>Whole-genome analyses of speciation events in pathogenic Brucellae.</title>
        <authorList>
            <person name="Chain P.S."/>
            <person name="Comerci D.J."/>
            <person name="Tolmasky M.E."/>
            <person name="Larimer F.W."/>
            <person name="Malfatti S.A."/>
            <person name="Vergez L.M."/>
            <person name="Aguero F."/>
            <person name="Land M.L."/>
            <person name="Ugalde R.A."/>
            <person name="Garcia E."/>
        </authorList>
    </citation>
    <scope>NUCLEOTIDE SEQUENCE [LARGE SCALE GENOMIC DNA]</scope>
    <source>
        <strain>2308</strain>
    </source>
</reference>
<gene>
    <name evidence="2" type="primary">tuf1</name>
    <name type="ordered locus">BAB1_1257</name>
</gene>
<gene>
    <name evidence="2" type="primary">tuf2</name>
    <name type="ordered locus">BAB1_1271</name>
</gene>
<organism>
    <name type="scientific">Brucella abortus (strain 2308)</name>
    <dbReference type="NCBI Taxonomy" id="359391"/>
    <lineage>
        <taxon>Bacteria</taxon>
        <taxon>Pseudomonadati</taxon>
        <taxon>Pseudomonadota</taxon>
        <taxon>Alphaproteobacteria</taxon>
        <taxon>Hyphomicrobiales</taxon>
        <taxon>Brucellaceae</taxon>
        <taxon>Brucella/Ochrobactrum group</taxon>
        <taxon>Brucella</taxon>
    </lineage>
</organism>
<keyword id="KW-0963">Cytoplasm</keyword>
<keyword id="KW-0251">Elongation factor</keyword>
<keyword id="KW-0342">GTP-binding</keyword>
<keyword id="KW-0378">Hydrolase</keyword>
<keyword id="KW-0460">Magnesium</keyword>
<keyword id="KW-0479">Metal-binding</keyword>
<keyword id="KW-0547">Nucleotide-binding</keyword>
<keyword id="KW-0648">Protein biosynthesis</keyword>
<keyword id="KW-1185">Reference proteome</keyword>
<evidence type="ECO:0000250" key="1"/>
<evidence type="ECO:0000255" key="2">
    <source>
        <dbReference type="HAMAP-Rule" id="MF_00118"/>
    </source>
</evidence>
<feature type="chain" id="PRO_0000337330" description="Elongation factor Tu">
    <location>
        <begin position="1"/>
        <end position="391"/>
    </location>
</feature>
<feature type="domain" description="tr-type G">
    <location>
        <begin position="10"/>
        <end position="201"/>
    </location>
</feature>
<feature type="region of interest" description="G1" evidence="1">
    <location>
        <begin position="19"/>
        <end position="26"/>
    </location>
</feature>
<feature type="region of interest" description="G2" evidence="1">
    <location>
        <begin position="55"/>
        <end position="59"/>
    </location>
</feature>
<feature type="region of interest" description="G3" evidence="1">
    <location>
        <begin position="76"/>
        <end position="79"/>
    </location>
</feature>
<feature type="region of interest" description="G4" evidence="1">
    <location>
        <begin position="131"/>
        <end position="134"/>
    </location>
</feature>
<feature type="region of interest" description="G5" evidence="1">
    <location>
        <begin position="169"/>
        <end position="171"/>
    </location>
</feature>
<feature type="binding site" evidence="2">
    <location>
        <begin position="19"/>
        <end position="26"/>
    </location>
    <ligand>
        <name>GTP</name>
        <dbReference type="ChEBI" id="CHEBI:37565"/>
    </ligand>
</feature>
<feature type="binding site" evidence="2">
    <location>
        <position position="26"/>
    </location>
    <ligand>
        <name>Mg(2+)</name>
        <dbReference type="ChEBI" id="CHEBI:18420"/>
    </ligand>
</feature>
<feature type="binding site" evidence="2">
    <location>
        <begin position="76"/>
        <end position="80"/>
    </location>
    <ligand>
        <name>GTP</name>
        <dbReference type="ChEBI" id="CHEBI:37565"/>
    </ligand>
</feature>
<feature type="binding site" evidence="2">
    <location>
        <begin position="131"/>
        <end position="134"/>
    </location>
    <ligand>
        <name>GTP</name>
        <dbReference type="ChEBI" id="CHEBI:37565"/>
    </ligand>
</feature>
<name>EFTU_BRUA2</name>
<dbReference type="EC" id="3.6.5.3" evidence="2"/>
<dbReference type="EMBL" id="AM040264">
    <property type="protein sequence ID" value="CAJ11213.1"/>
    <property type="molecule type" value="Genomic_DNA"/>
</dbReference>
<dbReference type="EMBL" id="AM040264">
    <property type="protein sequence ID" value="CAJ11227.1"/>
    <property type="molecule type" value="Genomic_DNA"/>
</dbReference>
<dbReference type="SMR" id="Q2YM08"/>
<dbReference type="STRING" id="359391.BAB1_1257"/>
<dbReference type="KEGG" id="bmf:BAB1_1257"/>
<dbReference type="KEGG" id="bmf:BAB1_1271"/>
<dbReference type="PATRIC" id="fig|359391.11.peg.157"/>
<dbReference type="HOGENOM" id="CLU_007265_0_0_5"/>
<dbReference type="PhylomeDB" id="Q2YM08"/>
<dbReference type="Proteomes" id="UP000002719">
    <property type="component" value="Chromosome I"/>
</dbReference>
<dbReference type="GO" id="GO:0005829">
    <property type="term" value="C:cytosol"/>
    <property type="evidence" value="ECO:0007669"/>
    <property type="project" value="TreeGrafter"/>
</dbReference>
<dbReference type="GO" id="GO:0005525">
    <property type="term" value="F:GTP binding"/>
    <property type="evidence" value="ECO:0007669"/>
    <property type="project" value="UniProtKB-UniRule"/>
</dbReference>
<dbReference type="GO" id="GO:0003924">
    <property type="term" value="F:GTPase activity"/>
    <property type="evidence" value="ECO:0007669"/>
    <property type="project" value="InterPro"/>
</dbReference>
<dbReference type="GO" id="GO:0097216">
    <property type="term" value="F:guanosine tetraphosphate binding"/>
    <property type="evidence" value="ECO:0007669"/>
    <property type="project" value="UniProtKB-ARBA"/>
</dbReference>
<dbReference type="GO" id="GO:0003746">
    <property type="term" value="F:translation elongation factor activity"/>
    <property type="evidence" value="ECO:0007669"/>
    <property type="project" value="UniProtKB-UniRule"/>
</dbReference>
<dbReference type="CDD" id="cd01884">
    <property type="entry name" value="EF_Tu"/>
    <property type="match status" value="1"/>
</dbReference>
<dbReference type="CDD" id="cd03697">
    <property type="entry name" value="EFTU_II"/>
    <property type="match status" value="1"/>
</dbReference>
<dbReference type="CDD" id="cd03707">
    <property type="entry name" value="EFTU_III"/>
    <property type="match status" value="1"/>
</dbReference>
<dbReference type="FunFam" id="2.40.30.10:FF:000001">
    <property type="entry name" value="Elongation factor Tu"/>
    <property type="match status" value="1"/>
</dbReference>
<dbReference type="FunFam" id="3.40.50.300:FF:000003">
    <property type="entry name" value="Elongation factor Tu"/>
    <property type="match status" value="1"/>
</dbReference>
<dbReference type="Gene3D" id="3.40.50.300">
    <property type="entry name" value="P-loop containing nucleotide triphosphate hydrolases"/>
    <property type="match status" value="1"/>
</dbReference>
<dbReference type="Gene3D" id="2.40.30.10">
    <property type="entry name" value="Translation factors"/>
    <property type="match status" value="2"/>
</dbReference>
<dbReference type="HAMAP" id="MF_00118_B">
    <property type="entry name" value="EF_Tu_B"/>
    <property type="match status" value="1"/>
</dbReference>
<dbReference type="InterPro" id="IPR041709">
    <property type="entry name" value="EF-Tu_GTP-bd"/>
</dbReference>
<dbReference type="InterPro" id="IPR050055">
    <property type="entry name" value="EF-Tu_GTPase"/>
</dbReference>
<dbReference type="InterPro" id="IPR004161">
    <property type="entry name" value="EFTu-like_2"/>
</dbReference>
<dbReference type="InterPro" id="IPR033720">
    <property type="entry name" value="EFTU_2"/>
</dbReference>
<dbReference type="InterPro" id="IPR031157">
    <property type="entry name" value="G_TR_CS"/>
</dbReference>
<dbReference type="InterPro" id="IPR027417">
    <property type="entry name" value="P-loop_NTPase"/>
</dbReference>
<dbReference type="InterPro" id="IPR005225">
    <property type="entry name" value="Small_GTP-bd"/>
</dbReference>
<dbReference type="InterPro" id="IPR000795">
    <property type="entry name" value="T_Tr_GTP-bd_dom"/>
</dbReference>
<dbReference type="InterPro" id="IPR009000">
    <property type="entry name" value="Transl_B-barrel_sf"/>
</dbReference>
<dbReference type="InterPro" id="IPR009001">
    <property type="entry name" value="Transl_elong_EF1A/Init_IF2_C"/>
</dbReference>
<dbReference type="InterPro" id="IPR004541">
    <property type="entry name" value="Transl_elong_EFTu/EF1A_bac/org"/>
</dbReference>
<dbReference type="InterPro" id="IPR004160">
    <property type="entry name" value="Transl_elong_EFTu/EF1A_C"/>
</dbReference>
<dbReference type="NCBIfam" id="TIGR00485">
    <property type="entry name" value="EF-Tu"/>
    <property type="match status" value="1"/>
</dbReference>
<dbReference type="NCBIfam" id="NF000766">
    <property type="entry name" value="PRK00049.1"/>
    <property type="match status" value="1"/>
</dbReference>
<dbReference type="NCBIfam" id="NF009372">
    <property type="entry name" value="PRK12735.1"/>
    <property type="match status" value="1"/>
</dbReference>
<dbReference type="NCBIfam" id="NF009373">
    <property type="entry name" value="PRK12736.1"/>
    <property type="match status" value="1"/>
</dbReference>
<dbReference type="NCBIfam" id="TIGR00231">
    <property type="entry name" value="small_GTP"/>
    <property type="match status" value="1"/>
</dbReference>
<dbReference type="PANTHER" id="PTHR43721:SF22">
    <property type="entry name" value="ELONGATION FACTOR TU, MITOCHONDRIAL"/>
    <property type="match status" value="1"/>
</dbReference>
<dbReference type="PANTHER" id="PTHR43721">
    <property type="entry name" value="ELONGATION FACTOR TU-RELATED"/>
    <property type="match status" value="1"/>
</dbReference>
<dbReference type="Pfam" id="PF00009">
    <property type="entry name" value="GTP_EFTU"/>
    <property type="match status" value="1"/>
</dbReference>
<dbReference type="Pfam" id="PF03144">
    <property type="entry name" value="GTP_EFTU_D2"/>
    <property type="match status" value="1"/>
</dbReference>
<dbReference type="Pfam" id="PF03143">
    <property type="entry name" value="GTP_EFTU_D3"/>
    <property type="match status" value="1"/>
</dbReference>
<dbReference type="PRINTS" id="PR00315">
    <property type="entry name" value="ELONGATNFCT"/>
</dbReference>
<dbReference type="SUPFAM" id="SSF50465">
    <property type="entry name" value="EF-Tu/eEF-1alpha/eIF2-gamma C-terminal domain"/>
    <property type="match status" value="1"/>
</dbReference>
<dbReference type="SUPFAM" id="SSF52540">
    <property type="entry name" value="P-loop containing nucleoside triphosphate hydrolases"/>
    <property type="match status" value="1"/>
</dbReference>
<dbReference type="SUPFAM" id="SSF50447">
    <property type="entry name" value="Translation proteins"/>
    <property type="match status" value="1"/>
</dbReference>
<dbReference type="PROSITE" id="PS00301">
    <property type="entry name" value="G_TR_1"/>
    <property type="match status" value="1"/>
</dbReference>
<dbReference type="PROSITE" id="PS51722">
    <property type="entry name" value="G_TR_2"/>
    <property type="match status" value="1"/>
</dbReference>
<comment type="function">
    <text evidence="2">GTP hydrolase that promotes the GTP-dependent binding of aminoacyl-tRNA to the A-site of ribosomes during protein biosynthesis.</text>
</comment>
<comment type="catalytic activity">
    <reaction evidence="2">
        <text>GTP + H2O = GDP + phosphate + H(+)</text>
        <dbReference type="Rhea" id="RHEA:19669"/>
        <dbReference type="ChEBI" id="CHEBI:15377"/>
        <dbReference type="ChEBI" id="CHEBI:15378"/>
        <dbReference type="ChEBI" id="CHEBI:37565"/>
        <dbReference type="ChEBI" id="CHEBI:43474"/>
        <dbReference type="ChEBI" id="CHEBI:58189"/>
        <dbReference type="EC" id="3.6.5.3"/>
    </reaction>
    <physiologicalReaction direction="left-to-right" evidence="2">
        <dbReference type="Rhea" id="RHEA:19670"/>
    </physiologicalReaction>
</comment>
<comment type="subunit">
    <text evidence="2">Monomer.</text>
</comment>
<comment type="subcellular location">
    <subcellularLocation>
        <location evidence="2">Cytoplasm</location>
    </subcellularLocation>
</comment>
<comment type="similarity">
    <text evidence="2">Belongs to the TRAFAC class translation factor GTPase superfamily. Classic translation factor GTPase family. EF-Tu/EF-1A subfamily.</text>
</comment>
<accession>Q2YM08</accession>
<proteinExistence type="inferred from homology"/>
<sequence>MAKSKFERTKPHVNIGTIGHVDHGKTSLTAAITKFFGEFKAYDQIDAAPEERARGITISTAHVEYETANRHYAHVDCPGHADYVKNMITGAAQMDGAILVVSAADGPMPQTREHILLARQVGVPAIVVFLNKCDQVDDAELLELVELEVRELLSKYEFPGDEIPIIKGSALAALEDSSKELGEDAIRNLMDAVDSYIPTPERPIDQPFLMPIEDVFSISGRGTVVTGRVERGIVKVGEEVEIVGIKATTKTTVTGVEMFRKLLDQGQAGDNIGALIRGVGREDVERGQVLCKPGSVKPHTKFKAEAYILTKDEGGRHTPFFTNYRPQFYFRTTDVTGVVTLPAGTEMVMPGDNVAMDVTLIVPIAMEEKLRFAIREGGRTVGAGIVSSIIE</sequence>